<proteinExistence type="inferred from homology"/>
<dbReference type="EC" id="1.3.5.2" evidence="1"/>
<dbReference type="EMBL" id="CP000749">
    <property type="protein sequence ID" value="ABR70664.1"/>
    <property type="molecule type" value="Genomic_DNA"/>
</dbReference>
<dbReference type="SMR" id="A6VW35"/>
<dbReference type="STRING" id="400668.Mmwyl1_1738"/>
<dbReference type="KEGG" id="mmw:Mmwyl1_1738"/>
<dbReference type="eggNOG" id="COG0167">
    <property type="taxonomic scope" value="Bacteria"/>
</dbReference>
<dbReference type="HOGENOM" id="CLU_013640_2_0_6"/>
<dbReference type="OrthoDB" id="9802377at2"/>
<dbReference type="UniPathway" id="UPA00070">
    <property type="reaction ID" value="UER00946"/>
</dbReference>
<dbReference type="GO" id="GO:0005737">
    <property type="term" value="C:cytoplasm"/>
    <property type="evidence" value="ECO:0007669"/>
    <property type="project" value="InterPro"/>
</dbReference>
<dbReference type="GO" id="GO:0005886">
    <property type="term" value="C:plasma membrane"/>
    <property type="evidence" value="ECO:0007669"/>
    <property type="project" value="UniProtKB-SubCell"/>
</dbReference>
<dbReference type="GO" id="GO:0106430">
    <property type="term" value="F:dihydroorotate dehydrogenase (quinone) activity"/>
    <property type="evidence" value="ECO:0007669"/>
    <property type="project" value="UniProtKB-EC"/>
</dbReference>
<dbReference type="GO" id="GO:0006207">
    <property type="term" value="P:'de novo' pyrimidine nucleobase biosynthetic process"/>
    <property type="evidence" value="ECO:0007669"/>
    <property type="project" value="InterPro"/>
</dbReference>
<dbReference type="GO" id="GO:0044205">
    <property type="term" value="P:'de novo' UMP biosynthetic process"/>
    <property type="evidence" value="ECO:0007669"/>
    <property type="project" value="UniProtKB-UniRule"/>
</dbReference>
<dbReference type="CDD" id="cd04738">
    <property type="entry name" value="DHOD_2_like"/>
    <property type="match status" value="1"/>
</dbReference>
<dbReference type="FunFam" id="3.20.20.70:FF:000028">
    <property type="entry name" value="Dihydroorotate dehydrogenase (quinone)"/>
    <property type="match status" value="1"/>
</dbReference>
<dbReference type="Gene3D" id="3.20.20.70">
    <property type="entry name" value="Aldolase class I"/>
    <property type="match status" value="1"/>
</dbReference>
<dbReference type="HAMAP" id="MF_00225">
    <property type="entry name" value="DHO_dh_type2"/>
    <property type="match status" value="1"/>
</dbReference>
<dbReference type="InterPro" id="IPR013785">
    <property type="entry name" value="Aldolase_TIM"/>
</dbReference>
<dbReference type="InterPro" id="IPR050074">
    <property type="entry name" value="DHO_dehydrogenase"/>
</dbReference>
<dbReference type="InterPro" id="IPR012135">
    <property type="entry name" value="Dihydroorotate_DH_1_2"/>
</dbReference>
<dbReference type="InterPro" id="IPR005719">
    <property type="entry name" value="Dihydroorotate_DH_2"/>
</dbReference>
<dbReference type="InterPro" id="IPR005720">
    <property type="entry name" value="Dihydroorotate_DH_cat"/>
</dbReference>
<dbReference type="InterPro" id="IPR001295">
    <property type="entry name" value="Dihydroorotate_DH_CS"/>
</dbReference>
<dbReference type="NCBIfam" id="NF003644">
    <property type="entry name" value="PRK05286.1-1"/>
    <property type="match status" value="1"/>
</dbReference>
<dbReference type="NCBIfam" id="NF003645">
    <property type="entry name" value="PRK05286.1-2"/>
    <property type="match status" value="1"/>
</dbReference>
<dbReference type="NCBIfam" id="NF003646">
    <property type="entry name" value="PRK05286.1-4"/>
    <property type="match status" value="1"/>
</dbReference>
<dbReference type="NCBIfam" id="NF003652">
    <property type="entry name" value="PRK05286.2-5"/>
    <property type="match status" value="1"/>
</dbReference>
<dbReference type="NCBIfam" id="TIGR01036">
    <property type="entry name" value="pyrD_sub2"/>
    <property type="match status" value="1"/>
</dbReference>
<dbReference type="PANTHER" id="PTHR48109:SF4">
    <property type="entry name" value="DIHYDROOROTATE DEHYDROGENASE (QUINONE), MITOCHONDRIAL"/>
    <property type="match status" value="1"/>
</dbReference>
<dbReference type="PANTHER" id="PTHR48109">
    <property type="entry name" value="DIHYDROOROTATE DEHYDROGENASE (QUINONE), MITOCHONDRIAL-RELATED"/>
    <property type="match status" value="1"/>
</dbReference>
<dbReference type="Pfam" id="PF01180">
    <property type="entry name" value="DHO_dh"/>
    <property type="match status" value="1"/>
</dbReference>
<dbReference type="PIRSF" id="PIRSF000164">
    <property type="entry name" value="DHO_oxidase"/>
    <property type="match status" value="1"/>
</dbReference>
<dbReference type="SUPFAM" id="SSF51395">
    <property type="entry name" value="FMN-linked oxidoreductases"/>
    <property type="match status" value="1"/>
</dbReference>
<dbReference type="PROSITE" id="PS00911">
    <property type="entry name" value="DHODEHASE_1"/>
    <property type="match status" value="1"/>
</dbReference>
<dbReference type="PROSITE" id="PS00912">
    <property type="entry name" value="DHODEHASE_2"/>
    <property type="match status" value="1"/>
</dbReference>
<protein>
    <recommendedName>
        <fullName evidence="1">Dihydroorotate dehydrogenase (quinone)</fullName>
        <ecNumber evidence="1">1.3.5.2</ecNumber>
    </recommendedName>
    <alternativeName>
        <fullName evidence="1">DHOdehase</fullName>
        <shortName evidence="1">DHOD</shortName>
        <shortName evidence="1">DHODase</shortName>
    </alternativeName>
    <alternativeName>
        <fullName evidence="1">Dihydroorotate oxidase</fullName>
    </alternativeName>
</protein>
<accession>A6VW35</accession>
<sequence>MYQLARSLLFKLDPEVSHELSLDLLAASSRLGLNRFLGGLPSTKPVDVMGLRFPNAVGLAAGLDKNADAFEALGALGFGFVEVGTVTPKGQAGNPKPRLFRLPEHEAIINRMGFNNKGVDHLVSRIKSHRYPGVLGVNIGKNLTTSVEDAAADYLACLESVIPYADYITANISSPNTPGLRSLQFGESLAQLIAPLVAARDRYEAAYGKRVPLAVKIAPDMTDDEIKMVADTLVDQGVDGIIATNTTLSREAVLGHQFEKEAGGLSGMPVRDASTHVVKVLAEHLKDTLPIIGVGGISSGADAVEKLQAGARLVQIYSGFIYHGPELIKEAVASTDAYYRELDLGI</sequence>
<comment type="function">
    <text evidence="1">Catalyzes the conversion of dihydroorotate to orotate with quinone as electron acceptor.</text>
</comment>
<comment type="catalytic activity">
    <reaction evidence="1">
        <text>(S)-dihydroorotate + a quinone = orotate + a quinol</text>
        <dbReference type="Rhea" id="RHEA:30187"/>
        <dbReference type="ChEBI" id="CHEBI:24646"/>
        <dbReference type="ChEBI" id="CHEBI:30839"/>
        <dbReference type="ChEBI" id="CHEBI:30864"/>
        <dbReference type="ChEBI" id="CHEBI:132124"/>
        <dbReference type="EC" id="1.3.5.2"/>
    </reaction>
</comment>
<comment type="cofactor">
    <cofactor evidence="1">
        <name>FMN</name>
        <dbReference type="ChEBI" id="CHEBI:58210"/>
    </cofactor>
    <text evidence="1">Binds 1 FMN per subunit.</text>
</comment>
<comment type="pathway">
    <text evidence="1">Pyrimidine metabolism; UMP biosynthesis via de novo pathway; orotate from (S)-dihydroorotate (quinone route): step 1/1.</text>
</comment>
<comment type="subunit">
    <text evidence="1">Monomer.</text>
</comment>
<comment type="subcellular location">
    <subcellularLocation>
        <location evidence="1">Cell membrane</location>
        <topology evidence="1">Peripheral membrane protein</topology>
    </subcellularLocation>
</comment>
<comment type="similarity">
    <text evidence="1">Belongs to the dihydroorotate dehydrogenase family. Type 2 subfamily.</text>
</comment>
<gene>
    <name evidence="1" type="primary">pyrD</name>
    <name type="ordered locus">Mmwyl1_1738</name>
</gene>
<keyword id="KW-1003">Cell membrane</keyword>
<keyword id="KW-0285">Flavoprotein</keyword>
<keyword id="KW-0288">FMN</keyword>
<keyword id="KW-0472">Membrane</keyword>
<keyword id="KW-0560">Oxidoreductase</keyword>
<keyword id="KW-0665">Pyrimidine biosynthesis</keyword>
<reference key="1">
    <citation type="submission" date="2007-06" db="EMBL/GenBank/DDBJ databases">
        <title>Complete sequence of Marinomonas sp. MWYL1.</title>
        <authorList>
            <consortium name="US DOE Joint Genome Institute"/>
            <person name="Copeland A."/>
            <person name="Lucas S."/>
            <person name="Lapidus A."/>
            <person name="Barry K."/>
            <person name="Glavina del Rio T."/>
            <person name="Dalin E."/>
            <person name="Tice H."/>
            <person name="Pitluck S."/>
            <person name="Kiss H."/>
            <person name="Brettin T."/>
            <person name="Bruce D."/>
            <person name="Detter J.C."/>
            <person name="Han C."/>
            <person name="Schmutz J."/>
            <person name="Larimer F."/>
            <person name="Land M."/>
            <person name="Hauser L."/>
            <person name="Kyrpides N."/>
            <person name="Kim E."/>
            <person name="Johnston A.W.B."/>
            <person name="Todd J.D."/>
            <person name="Rogers R."/>
            <person name="Wexler M."/>
            <person name="Bond P.L."/>
            <person name="Li Y."/>
            <person name="Richardson P."/>
        </authorList>
    </citation>
    <scope>NUCLEOTIDE SEQUENCE [LARGE SCALE GENOMIC DNA]</scope>
    <source>
        <strain>MWYL1</strain>
    </source>
</reference>
<name>PYRD_MARMS</name>
<organism>
    <name type="scientific">Marinomonas sp. (strain MWYL1)</name>
    <dbReference type="NCBI Taxonomy" id="400668"/>
    <lineage>
        <taxon>Bacteria</taxon>
        <taxon>Pseudomonadati</taxon>
        <taxon>Pseudomonadota</taxon>
        <taxon>Gammaproteobacteria</taxon>
        <taxon>Oceanospirillales</taxon>
        <taxon>Oceanospirillaceae</taxon>
        <taxon>Marinomonas</taxon>
    </lineage>
</organism>
<feature type="chain" id="PRO_0000336474" description="Dihydroorotate dehydrogenase (quinone)">
    <location>
        <begin position="1"/>
        <end position="346"/>
    </location>
</feature>
<feature type="active site" description="Nucleophile" evidence="1">
    <location>
        <position position="174"/>
    </location>
</feature>
<feature type="binding site" evidence="1">
    <location>
        <begin position="61"/>
        <end position="65"/>
    </location>
    <ligand>
        <name>FMN</name>
        <dbReference type="ChEBI" id="CHEBI:58210"/>
    </ligand>
</feature>
<feature type="binding site" evidence="1">
    <location>
        <position position="65"/>
    </location>
    <ligand>
        <name>substrate</name>
    </ligand>
</feature>
<feature type="binding site" evidence="1">
    <location>
        <position position="85"/>
    </location>
    <ligand>
        <name>FMN</name>
        <dbReference type="ChEBI" id="CHEBI:58210"/>
    </ligand>
</feature>
<feature type="binding site" evidence="1">
    <location>
        <begin position="110"/>
        <end position="114"/>
    </location>
    <ligand>
        <name>substrate</name>
    </ligand>
</feature>
<feature type="binding site" evidence="1">
    <location>
        <position position="138"/>
    </location>
    <ligand>
        <name>FMN</name>
        <dbReference type="ChEBI" id="CHEBI:58210"/>
    </ligand>
</feature>
<feature type="binding site" evidence="1">
    <location>
        <position position="171"/>
    </location>
    <ligand>
        <name>FMN</name>
        <dbReference type="ChEBI" id="CHEBI:58210"/>
    </ligand>
</feature>
<feature type="binding site" evidence="1">
    <location>
        <position position="171"/>
    </location>
    <ligand>
        <name>substrate</name>
    </ligand>
</feature>
<feature type="binding site" evidence="1">
    <location>
        <position position="176"/>
    </location>
    <ligand>
        <name>substrate</name>
    </ligand>
</feature>
<feature type="binding site" evidence="1">
    <location>
        <position position="216"/>
    </location>
    <ligand>
        <name>FMN</name>
        <dbReference type="ChEBI" id="CHEBI:58210"/>
    </ligand>
</feature>
<feature type="binding site" evidence="1">
    <location>
        <position position="244"/>
    </location>
    <ligand>
        <name>FMN</name>
        <dbReference type="ChEBI" id="CHEBI:58210"/>
    </ligand>
</feature>
<feature type="binding site" evidence="1">
    <location>
        <begin position="245"/>
        <end position="246"/>
    </location>
    <ligand>
        <name>substrate</name>
    </ligand>
</feature>
<feature type="binding site" evidence="1">
    <location>
        <position position="267"/>
    </location>
    <ligand>
        <name>FMN</name>
        <dbReference type="ChEBI" id="CHEBI:58210"/>
    </ligand>
</feature>
<feature type="binding site" evidence="1">
    <location>
        <position position="296"/>
    </location>
    <ligand>
        <name>FMN</name>
        <dbReference type="ChEBI" id="CHEBI:58210"/>
    </ligand>
</feature>
<feature type="binding site" evidence="1">
    <location>
        <begin position="317"/>
        <end position="318"/>
    </location>
    <ligand>
        <name>FMN</name>
        <dbReference type="ChEBI" id="CHEBI:58210"/>
    </ligand>
</feature>
<evidence type="ECO:0000255" key="1">
    <source>
        <dbReference type="HAMAP-Rule" id="MF_00225"/>
    </source>
</evidence>